<feature type="chain" id="PRO_0000440302" description="Homoserine O-succinyltransferase">
    <location>
        <begin position="1"/>
        <end position="390"/>
    </location>
</feature>
<feature type="domain" description="AB hydrolase-1" evidence="1">
    <location>
        <begin position="56"/>
        <end position="365"/>
    </location>
</feature>
<feature type="active site" description="Nucleophile" evidence="1">
    <location>
        <position position="162"/>
    </location>
</feature>
<feature type="active site" evidence="1">
    <location>
        <position position="327"/>
    </location>
</feature>
<feature type="active site" evidence="1">
    <location>
        <position position="360"/>
    </location>
</feature>
<feature type="binding site" evidence="1">
    <location>
        <position position="232"/>
    </location>
    <ligand>
        <name>substrate</name>
    </ligand>
</feature>
<feature type="binding site" evidence="1">
    <location>
        <position position="361"/>
    </location>
    <ligand>
        <name>substrate</name>
    </ligand>
</feature>
<feature type="site" description="Important for acyl-CoA specificity" evidence="1 4">
    <location>
        <position position="329"/>
    </location>
</feature>
<comment type="function">
    <text evidence="2">Transfers a succinyl group from succinyl-CoA to L-homoserine, forming succinyl-L-homoserine. In vitro, also has serine succinyl transferase activity.</text>
</comment>
<comment type="catalytic activity">
    <reaction evidence="1 2">
        <text>L-homoserine + succinyl-CoA = O-succinyl-L-homoserine + CoA</text>
        <dbReference type="Rhea" id="RHEA:22008"/>
        <dbReference type="ChEBI" id="CHEBI:57287"/>
        <dbReference type="ChEBI" id="CHEBI:57292"/>
        <dbReference type="ChEBI" id="CHEBI:57476"/>
        <dbReference type="ChEBI" id="CHEBI:57661"/>
        <dbReference type="EC" id="2.3.1.46"/>
    </reaction>
</comment>
<comment type="pathway">
    <text evidence="1">Amino-acid biosynthesis; L-methionine biosynthesis via de novo pathway; O-succinyl-L-homoserine from L-homoserine: step 1/1.</text>
</comment>
<comment type="subunit">
    <text evidence="1">Homodimer.</text>
</comment>
<comment type="subcellular location">
    <subcellularLocation>
        <location evidence="1">Cytoplasm</location>
    </subcellularLocation>
</comment>
<comment type="similarity">
    <text evidence="1">Belongs to the AB hydrolase superfamily. MetX family.</text>
</comment>
<sequence>MDSDTLMPELPSDSVGLVAPQTAHFDVPLALACGKTLQSYDLVYETYGKLNASRSNAVLICHALSGHHHAAGYHSREDRKPGWWDAHIGPGKSIDTDRFFVISLNNLGGCHGSTGPCAINPDTGRQWGPDFPMMTVGDWVHSQARLADRLGIERFAAVIGGSLGGMQVLQWSLAYPERIANAVVIAATPKLSAQNIAFNEVARQAIRSDPDFYDGWYAEHDTLPRRGLKLARMVGHITYLSEDAMGSKFGRDLRSDDLNFGYDVEFQVESYLRYQGDTFSTSFDANTYLLMTKALDYFDPAAAHDGDLAAAVAPASCPFLVVSFSTDWRFPPSRSRELVDALIRAGKPVSYVCIDSPHGHDAFLLPETRYQAIFASFMGRVAHDSGLEDS</sequence>
<dbReference type="EC" id="2.3.1.46" evidence="1 2"/>
<dbReference type="EMBL" id="ASTJ01000044">
    <property type="protein sequence ID" value="EPC00121.1"/>
    <property type="molecule type" value="Genomic_DNA"/>
</dbReference>
<dbReference type="SMR" id="S2L5R8"/>
<dbReference type="STRING" id="1121939.L861_08120"/>
<dbReference type="ESTHER" id="halaf-metxs">
    <property type="family name" value="Homoserine_transacetylase"/>
</dbReference>
<dbReference type="PATRIC" id="fig|1121939.11.peg.4562"/>
<dbReference type="eggNOG" id="COG2021">
    <property type="taxonomic scope" value="Bacteria"/>
</dbReference>
<dbReference type="UniPathway" id="UPA00051">
    <property type="reaction ID" value="UER00075"/>
</dbReference>
<dbReference type="Proteomes" id="UP000014463">
    <property type="component" value="Unassembled WGS sequence"/>
</dbReference>
<dbReference type="GO" id="GO:0005737">
    <property type="term" value="C:cytoplasm"/>
    <property type="evidence" value="ECO:0007669"/>
    <property type="project" value="UniProtKB-SubCell"/>
</dbReference>
<dbReference type="GO" id="GO:0004414">
    <property type="term" value="F:homoserine O-acetyltransferase activity"/>
    <property type="evidence" value="ECO:0007669"/>
    <property type="project" value="TreeGrafter"/>
</dbReference>
<dbReference type="GO" id="GO:0008899">
    <property type="term" value="F:homoserine O-succinyltransferase activity"/>
    <property type="evidence" value="ECO:0007669"/>
    <property type="project" value="UniProtKB-UniRule"/>
</dbReference>
<dbReference type="GO" id="GO:0009092">
    <property type="term" value="P:homoserine metabolic process"/>
    <property type="evidence" value="ECO:0007669"/>
    <property type="project" value="TreeGrafter"/>
</dbReference>
<dbReference type="GO" id="GO:0009086">
    <property type="term" value="P:methionine biosynthetic process"/>
    <property type="evidence" value="ECO:0007669"/>
    <property type="project" value="UniProtKB-UniRule"/>
</dbReference>
<dbReference type="FunFam" id="1.10.1740.110:FF:000001">
    <property type="entry name" value="Homoserine O-acetyltransferase"/>
    <property type="match status" value="1"/>
</dbReference>
<dbReference type="Gene3D" id="1.10.1740.110">
    <property type="match status" value="1"/>
</dbReference>
<dbReference type="Gene3D" id="3.40.50.1820">
    <property type="entry name" value="alpha/beta hydrolase"/>
    <property type="match status" value="1"/>
</dbReference>
<dbReference type="HAMAP" id="MF_00296">
    <property type="entry name" value="MetX_acyltransf"/>
    <property type="match status" value="1"/>
</dbReference>
<dbReference type="InterPro" id="IPR000073">
    <property type="entry name" value="AB_hydrolase_1"/>
</dbReference>
<dbReference type="InterPro" id="IPR029058">
    <property type="entry name" value="AB_hydrolase_fold"/>
</dbReference>
<dbReference type="InterPro" id="IPR008220">
    <property type="entry name" value="HAT_MetX-like"/>
</dbReference>
<dbReference type="NCBIfam" id="TIGR01392">
    <property type="entry name" value="homoserO_Ac_trn"/>
    <property type="match status" value="1"/>
</dbReference>
<dbReference type="NCBIfam" id="NF001209">
    <property type="entry name" value="PRK00175.1"/>
    <property type="match status" value="1"/>
</dbReference>
<dbReference type="PANTHER" id="PTHR32268">
    <property type="entry name" value="HOMOSERINE O-ACETYLTRANSFERASE"/>
    <property type="match status" value="1"/>
</dbReference>
<dbReference type="PANTHER" id="PTHR32268:SF11">
    <property type="entry name" value="HOMOSERINE O-ACETYLTRANSFERASE"/>
    <property type="match status" value="1"/>
</dbReference>
<dbReference type="Pfam" id="PF00561">
    <property type="entry name" value="Abhydrolase_1"/>
    <property type="match status" value="1"/>
</dbReference>
<dbReference type="PIRSF" id="PIRSF000443">
    <property type="entry name" value="Homoser_Ac_trans"/>
    <property type="match status" value="1"/>
</dbReference>
<dbReference type="SUPFAM" id="SSF53474">
    <property type="entry name" value="alpha/beta-Hydrolases"/>
    <property type="match status" value="1"/>
</dbReference>
<name>METXS_LITA3</name>
<accession>S2L5R8</accession>
<protein>
    <recommendedName>
        <fullName evidence="1">Homoserine O-succinyltransferase</fullName>
        <shortName evidence="1 3">HST</shortName>
        <ecNumber evidence="1 2">2.3.1.46</ecNumber>
    </recommendedName>
    <alternativeName>
        <fullName evidence="1">Homoserine transsuccinylase</fullName>
        <shortName evidence="1">HTS</shortName>
    </alternativeName>
</protein>
<organism>
    <name type="scientific">Litchfieldella anticariensis (strain DSM 16096 / CECT 5854 / CIP 108499 / LMG 22089 / FP35)</name>
    <name type="common">Halomonas anticariensis</name>
    <dbReference type="NCBI Taxonomy" id="1121939"/>
    <lineage>
        <taxon>Bacteria</taxon>
        <taxon>Pseudomonadati</taxon>
        <taxon>Pseudomonadota</taxon>
        <taxon>Gammaproteobacteria</taxon>
        <taxon>Oceanospirillales</taxon>
        <taxon>Halomonadaceae</taxon>
        <taxon>Litchfieldella</taxon>
    </lineage>
</organism>
<proteinExistence type="evidence at protein level"/>
<evidence type="ECO:0000255" key="1">
    <source>
        <dbReference type="HAMAP-Rule" id="MF_00296"/>
    </source>
</evidence>
<evidence type="ECO:0000269" key="2">
    <source>
    </source>
</evidence>
<evidence type="ECO:0000303" key="3">
    <source>
    </source>
</evidence>
<evidence type="ECO:0000305" key="4">
    <source>
    </source>
</evidence>
<evidence type="ECO:0000312" key="5">
    <source>
        <dbReference type="EMBL" id="EPC00121.1"/>
    </source>
</evidence>
<reference key="1">
    <citation type="journal article" date="2013" name="Genome Announc.">
        <title>Draft genome sequence of the moderately halophilic gammaproteobacterium Halomonas anticariensis FP35.</title>
        <authorList>
            <person name="Tahrioui A."/>
            <person name="Quesada E."/>
            <person name="Llamas I."/>
        </authorList>
    </citation>
    <scope>NUCLEOTIDE SEQUENCE [LARGE SCALE GENOMIC DNA]</scope>
    <source>
        <strain>DSM 16096 / CECT 5854 / CIP 108499 / LMG 22089 / FP35</strain>
    </source>
</reference>
<reference key="2">
    <citation type="journal article" date="2017" name="Nat. Chem. Biol.">
        <title>Parallel evolution of non-homologous isofunctional enzymes in methionine biosynthesis.</title>
        <authorList>
            <person name="Bastard K."/>
            <person name="Perret A."/>
            <person name="Mariage A."/>
            <person name="Bessonnet T."/>
            <person name="Pinet-Turpault A."/>
            <person name="Petit J.L."/>
            <person name="Darii E."/>
            <person name="Bazire P."/>
            <person name="Vergne-Vaxelaire C."/>
            <person name="Brewee C."/>
            <person name="Debard A."/>
            <person name="Pellouin V."/>
            <person name="Besnard-Gonnet M."/>
            <person name="Artiguenave F."/>
            <person name="Medigue C."/>
            <person name="Vallenet D."/>
            <person name="Danchin A."/>
            <person name="Zaparucha A."/>
            <person name="Weissenbach J."/>
            <person name="Salanoubat M."/>
            <person name="de Berardinis V."/>
        </authorList>
    </citation>
    <scope>FUNCTION</scope>
    <scope>CATALYTIC ACTIVITY</scope>
</reference>
<gene>
    <name evidence="1" type="primary">metXS</name>
    <name evidence="5" type="ORF">L861_08120</name>
</gene>
<keyword id="KW-0012">Acyltransferase</keyword>
<keyword id="KW-0028">Amino-acid biosynthesis</keyword>
<keyword id="KW-0963">Cytoplasm</keyword>
<keyword id="KW-0486">Methionine biosynthesis</keyword>
<keyword id="KW-1185">Reference proteome</keyword>
<keyword id="KW-0808">Transferase</keyword>